<keyword id="KW-0396">Initiation factor</keyword>
<keyword id="KW-0648">Protein biosynthesis</keyword>
<dbReference type="EMBL" id="CP001401">
    <property type="protein sequence ID" value="ACP54205.1"/>
    <property type="molecule type" value="Genomic_DNA"/>
</dbReference>
<dbReference type="SMR" id="C3N120"/>
<dbReference type="KEGG" id="sim:M1627_0175"/>
<dbReference type="HOGENOM" id="CLU_026663_3_1_2"/>
<dbReference type="Proteomes" id="UP000002307">
    <property type="component" value="Chromosome"/>
</dbReference>
<dbReference type="GO" id="GO:0003743">
    <property type="term" value="F:translation initiation factor activity"/>
    <property type="evidence" value="ECO:0007669"/>
    <property type="project" value="UniProtKB-UniRule"/>
</dbReference>
<dbReference type="FunFam" id="3.30.30.170:FF:000001">
    <property type="entry name" value="Eukaryotic translation initiation factor 2 subunit"/>
    <property type="match status" value="1"/>
</dbReference>
<dbReference type="Gene3D" id="3.30.30.170">
    <property type="match status" value="1"/>
</dbReference>
<dbReference type="HAMAP" id="MF_00232">
    <property type="entry name" value="eIF_2_beta"/>
    <property type="match status" value="1"/>
</dbReference>
<dbReference type="InterPro" id="IPR045196">
    <property type="entry name" value="IF2/IF5"/>
</dbReference>
<dbReference type="InterPro" id="IPR004458">
    <property type="entry name" value="TIF2_bsu_arc"/>
</dbReference>
<dbReference type="InterPro" id="IPR002735">
    <property type="entry name" value="Transl_init_fac_IF2/IF5_dom"/>
</dbReference>
<dbReference type="InterPro" id="IPR016189">
    <property type="entry name" value="Transl_init_fac_IF2/IF5_N"/>
</dbReference>
<dbReference type="InterPro" id="IPR016190">
    <property type="entry name" value="Transl_init_fac_IF2/IF5_Zn-bd"/>
</dbReference>
<dbReference type="NCBIfam" id="NF003067">
    <property type="entry name" value="PRK03988.1"/>
    <property type="match status" value="1"/>
</dbReference>
<dbReference type="PANTHER" id="PTHR23001">
    <property type="entry name" value="EUKARYOTIC TRANSLATION INITIATION FACTOR"/>
    <property type="match status" value="1"/>
</dbReference>
<dbReference type="PANTHER" id="PTHR23001:SF3">
    <property type="entry name" value="EUKARYOTIC TRANSLATION INITIATION FACTOR 2 SUBUNIT 2"/>
    <property type="match status" value="1"/>
</dbReference>
<dbReference type="Pfam" id="PF01873">
    <property type="entry name" value="eIF-5_eIF-2B"/>
    <property type="match status" value="1"/>
</dbReference>
<dbReference type="SMART" id="SM00653">
    <property type="entry name" value="eIF2B_5"/>
    <property type="match status" value="1"/>
</dbReference>
<dbReference type="SUPFAM" id="SSF100966">
    <property type="entry name" value="Translation initiation factor 2 beta, aIF2beta, N-terminal domain"/>
    <property type="match status" value="1"/>
</dbReference>
<dbReference type="SUPFAM" id="SSF75689">
    <property type="entry name" value="Zinc-binding domain of translation initiation factor 2 beta"/>
    <property type="match status" value="1"/>
</dbReference>
<feature type="chain" id="PRO_1000204377" description="Translation initiation factor 2 subunit beta">
    <location>
        <begin position="1"/>
        <end position="139"/>
    </location>
</feature>
<evidence type="ECO:0000255" key="1">
    <source>
        <dbReference type="HAMAP-Rule" id="MF_00232"/>
    </source>
</evidence>
<protein>
    <recommendedName>
        <fullName evidence="1">Translation initiation factor 2 subunit beta</fullName>
    </recommendedName>
    <alternativeName>
        <fullName evidence="1">aIF2-beta</fullName>
    </alternativeName>
    <alternativeName>
        <fullName evidence="1">eIF-2-beta</fullName>
    </alternativeName>
</protein>
<reference key="1">
    <citation type="journal article" date="2009" name="Proc. Natl. Acad. Sci. U.S.A.">
        <title>Biogeography of the Sulfolobus islandicus pan-genome.</title>
        <authorList>
            <person name="Reno M.L."/>
            <person name="Held N.L."/>
            <person name="Fields C.J."/>
            <person name="Burke P.V."/>
            <person name="Whitaker R.J."/>
        </authorList>
    </citation>
    <scope>NUCLEOTIDE SEQUENCE [LARGE SCALE GENOMIC DNA]</scope>
    <source>
        <strain>M.16.27</strain>
    </source>
</reference>
<accession>C3N120</accession>
<organism>
    <name type="scientific">Saccharolobus islandicus (strain M.16.27)</name>
    <name type="common">Sulfolobus islandicus</name>
    <dbReference type="NCBI Taxonomy" id="427318"/>
    <lineage>
        <taxon>Archaea</taxon>
        <taxon>Thermoproteota</taxon>
        <taxon>Thermoprotei</taxon>
        <taxon>Sulfolobales</taxon>
        <taxon>Sulfolobaceae</taxon>
        <taxon>Saccharolobus</taxon>
    </lineage>
</organism>
<name>IF2B_SACI3</name>
<sequence>MSSEKEYVEMLDRLYSKLPEKGRKEGTQALPNLIIFNIGNTTMIRNFAEYCDRIRREDKICMKYLLKELAAPGNVDDKGELIIQGKFSSQVINTLMERFLKAYVECSTCKSLDTVLKKEKKSWYIVCLACGAQTPVKPL</sequence>
<gene>
    <name evidence="1" type="primary">eif2b</name>
    <name type="ordered locus">M1627_0175</name>
</gene>
<proteinExistence type="inferred from homology"/>
<comment type="function">
    <text evidence="1">eIF-2 functions in the early steps of protein synthesis by forming a ternary complex with GTP and initiator tRNA.</text>
</comment>
<comment type="subunit">
    <text evidence="1">Heterotrimer composed of an alpha, a beta and a gamma chain.</text>
</comment>
<comment type="similarity">
    <text evidence="1">Belongs to the eIF-2-beta/eIF-5 family.</text>
</comment>